<comment type="function">
    <text evidence="1">Catalyzes the formation of 4-diphosphocytidyl-2-C-methyl-D-erythritol from CTP and 2-C-methyl-D-erythritol 4-phosphate (MEP).</text>
</comment>
<comment type="catalytic activity">
    <reaction evidence="1">
        <text>2-C-methyl-D-erythritol 4-phosphate + CTP + H(+) = 4-CDP-2-C-methyl-D-erythritol + diphosphate</text>
        <dbReference type="Rhea" id="RHEA:13429"/>
        <dbReference type="ChEBI" id="CHEBI:15378"/>
        <dbReference type="ChEBI" id="CHEBI:33019"/>
        <dbReference type="ChEBI" id="CHEBI:37563"/>
        <dbReference type="ChEBI" id="CHEBI:57823"/>
        <dbReference type="ChEBI" id="CHEBI:58262"/>
        <dbReference type="EC" id="2.7.7.60"/>
    </reaction>
</comment>
<comment type="pathway">
    <text evidence="1">Isoprenoid biosynthesis; isopentenyl diphosphate biosynthesis via DXP pathway; isopentenyl diphosphate from 1-deoxy-D-xylulose 5-phosphate: step 2/6.</text>
</comment>
<comment type="subunit">
    <text evidence="1">Homodimer.</text>
</comment>
<comment type="similarity">
    <text evidence="1">Belongs to the IspD/TarI cytidylyltransferase family. IspD subfamily.</text>
</comment>
<dbReference type="EC" id="2.7.7.60" evidence="1"/>
<dbReference type="EMBL" id="CP000822">
    <property type="protein sequence ID" value="ABV15174.1"/>
    <property type="molecule type" value="Genomic_DNA"/>
</dbReference>
<dbReference type="RefSeq" id="WP_012134863.1">
    <property type="nucleotide sequence ID" value="NC_009792.1"/>
</dbReference>
<dbReference type="SMR" id="A8ANW1"/>
<dbReference type="STRING" id="290338.CKO_04108"/>
<dbReference type="GeneID" id="45137745"/>
<dbReference type="KEGG" id="cko:CKO_04108"/>
<dbReference type="HOGENOM" id="CLU_061281_3_1_6"/>
<dbReference type="OrthoDB" id="9806837at2"/>
<dbReference type="UniPathway" id="UPA00056">
    <property type="reaction ID" value="UER00093"/>
</dbReference>
<dbReference type="Proteomes" id="UP000008148">
    <property type="component" value="Chromosome"/>
</dbReference>
<dbReference type="GO" id="GO:0050518">
    <property type="term" value="F:2-C-methyl-D-erythritol 4-phosphate cytidylyltransferase activity"/>
    <property type="evidence" value="ECO:0007669"/>
    <property type="project" value="UniProtKB-UniRule"/>
</dbReference>
<dbReference type="GO" id="GO:0019288">
    <property type="term" value="P:isopentenyl diphosphate biosynthetic process, methylerythritol 4-phosphate pathway"/>
    <property type="evidence" value="ECO:0007669"/>
    <property type="project" value="UniProtKB-UniRule"/>
</dbReference>
<dbReference type="CDD" id="cd02516">
    <property type="entry name" value="CDP-ME_synthetase"/>
    <property type="match status" value="1"/>
</dbReference>
<dbReference type="FunFam" id="3.90.550.10:FF:000003">
    <property type="entry name" value="2-C-methyl-D-erythritol 4-phosphate cytidylyltransferase"/>
    <property type="match status" value="1"/>
</dbReference>
<dbReference type="Gene3D" id="3.90.550.10">
    <property type="entry name" value="Spore Coat Polysaccharide Biosynthesis Protein SpsA, Chain A"/>
    <property type="match status" value="1"/>
</dbReference>
<dbReference type="HAMAP" id="MF_00108">
    <property type="entry name" value="IspD"/>
    <property type="match status" value="1"/>
</dbReference>
<dbReference type="InterPro" id="IPR001228">
    <property type="entry name" value="IspD"/>
</dbReference>
<dbReference type="InterPro" id="IPR034683">
    <property type="entry name" value="IspD/TarI"/>
</dbReference>
<dbReference type="InterPro" id="IPR050088">
    <property type="entry name" value="IspD/TarI_cytidylyltransf_bact"/>
</dbReference>
<dbReference type="InterPro" id="IPR018294">
    <property type="entry name" value="ISPD_synthase_CS"/>
</dbReference>
<dbReference type="InterPro" id="IPR029044">
    <property type="entry name" value="Nucleotide-diphossugar_trans"/>
</dbReference>
<dbReference type="NCBIfam" id="TIGR00453">
    <property type="entry name" value="ispD"/>
    <property type="match status" value="1"/>
</dbReference>
<dbReference type="PANTHER" id="PTHR32125">
    <property type="entry name" value="2-C-METHYL-D-ERYTHRITOL 4-PHOSPHATE CYTIDYLYLTRANSFERASE, CHLOROPLASTIC"/>
    <property type="match status" value="1"/>
</dbReference>
<dbReference type="PANTHER" id="PTHR32125:SF4">
    <property type="entry name" value="2-C-METHYL-D-ERYTHRITOL 4-PHOSPHATE CYTIDYLYLTRANSFERASE, CHLOROPLASTIC"/>
    <property type="match status" value="1"/>
</dbReference>
<dbReference type="Pfam" id="PF01128">
    <property type="entry name" value="IspD"/>
    <property type="match status" value="1"/>
</dbReference>
<dbReference type="SUPFAM" id="SSF53448">
    <property type="entry name" value="Nucleotide-diphospho-sugar transferases"/>
    <property type="match status" value="1"/>
</dbReference>
<dbReference type="PROSITE" id="PS01295">
    <property type="entry name" value="ISPD"/>
    <property type="match status" value="1"/>
</dbReference>
<evidence type="ECO:0000255" key="1">
    <source>
        <dbReference type="HAMAP-Rule" id="MF_00108"/>
    </source>
</evidence>
<organism>
    <name type="scientific">Citrobacter koseri (strain ATCC BAA-895 / CDC 4225-83 / SGSC4696)</name>
    <dbReference type="NCBI Taxonomy" id="290338"/>
    <lineage>
        <taxon>Bacteria</taxon>
        <taxon>Pseudomonadati</taxon>
        <taxon>Pseudomonadota</taxon>
        <taxon>Gammaproteobacteria</taxon>
        <taxon>Enterobacterales</taxon>
        <taxon>Enterobacteriaceae</taxon>
        <taxon>Citrobacter</taxon>
    </lineage>
</organism>
<proteinExistence type="inferred from homology"/>
<reference key="1">
    <citation type="submission" date="2007-08" db="EMBL/GenBank/DDBJ databases">
        <authorList>
            <consortium name="The Citrobacter koseri Genome Sequencing Project"/>
            <person name="McClelland M."/>
            <person name="Sanderson E.K."/>
            <person name="Porwollik S."/>
            <person name="Spieth J."/>
            <person name="Clifton W.S."/>
            <person name="Latreille P."/>
            <person name="Courtney L."/>
            <person name="Wang C."/>
            <person name="Pepin K."/>
            <person name="Bhonagiri V."/>
            <person name="Nash W."/>
            <person name="Johnson M."/>
            <person name="Thiruvilangam P."/>
            <person name="Wilson R."/>
        </authorList>
    </citation>
    <scope>NUCLEOTIDE SEQUENCE [LARGE SCALE GENOMIC DNA]</scope>
    <source>
        <strain>ATCC BAA-895 / CDC 4225-83 / SGSC4696</strain>
    </source>
</reference>
<accession>A8ANW1</accession>
<gene>
    <name evidence="1" type="primary">ispD</name>
    <name type="ordered locus">CKO_04108</name>
</gene>
<name>ISPD_CITK8</name>
<protein>
    <recommendedName>
        <fullName evidence="1">2-C-methyl-D-erythritol 4-phosphate cytidylyltransferase</fullName>
        <ecNumber evidence="1">2.7.7.60</ecNumber>
    </recommendedName>
    <alternativeName>
        <fullName evidence="1">4-diphosphocytidyl-2C-methyl-D-erythritol synthase</fullName>
    </alternativeName>
    <alternativeName>
        <fullName evidence="1">MEP cytidylyltransferase</fullName>
        <shortName evidence="1">MCT</shortName>
    </alternativeName>
</protein>
<sequence length="231" mass="25094">MAATLLDVCAVVPAAGFGRRMQTECPKQYLSIGNKTILEHSVHALLAHPRVTRVVIAISPGDSRFAELPLAQHPQVTVVDGGDERADSVLAGLRAAGDAQWVLVHDAARPCLHQDDLARLLSLSETSRTGGILAAPVRDTMKRAEPGKAAIAHTVERTDLWHALTPQFFPRELLHDCLSRALNEGATITDEASALEYCGFHPQLVEGRADNIKVTRPEDLALAEFYLTRTI</sequence>
<keyword id="KW-0414">Isoprene biosynthesis</keyword>
<keyword id="KW-0548">Nucleotidyltransferase</keyword>
<keyword id="KW-1185">Reference proteome</keyword>
<keyword id="KW-0808">Transferase</keyword>
<feature type="chain" id="PRO_1000022913" description="2-C-methyl-D-erythritol 4-phosphate cytidylyltransferase">
    <location>
        <begin position="1"/>
        <end position="231"/>
    </location>
</feature>
<feature type="site" description="Transition state stabilizer" evidence="1">
    <location>
        <position position="20"/>
    </location>
</feature>
<feature type="site" description="Transition state stabilizer" evidence="1">
    <location>
        <position position="27"/>
    </location>
</feature>
<feature type="site" description="Positions MEP for the nucleophilic attack" evidence="1">
    <location>
        <position position="157"/>
    </location>
</feature>
<feature type="site" description="Positions MEP for the nucleophilic attack" evidence="1">
    <location>
        <position position="213"/>
    </location>
</feature>